<organism>
    <name type="scientific">Janthinobacterium sp. (strain Marseille)</name>
    <name type="common">Minibacterium massiliensis</name>
    <dbReference type="NCBI Taxonomy" id="375286"/>
    <lineage>
        <taxon>Bacteria</taxon>
        <taxon>Pseudomonadati</taxon>
        <taxon>Pseudomonadota</taxon>
        <taxon>Betaproteobacteria</taxon>
        <taxon>Burkholderiales</taxon>
        <taxon>Oxalobacteraceae</taxon>
        <taxon>Janthinobacterium</taxon>
    </lineage>
</organism>
<reference key="1">
    <citation type="journal article" date="2007" name="PLoS Genet.">
        <title>Genome analysis of Minibacterium massiliensis highlights the convergent evolution of water-living bacteria.</title>
        <authorList>
            <person name="Audic S."/>
            <person name="Robert C."/>
            <person name="Campagna B."/>
            <person name="Parinello H."/>
            <person name="Claverie J.-M."/>
            <person name="Raoult D."/>
            <person name="Drancourt M."/>
        </authorList>
    </citation>
    <scope>NUCLEOTIDE SEQUENCE [LARGE SCALE GENOMIC DNA]</scope>
    <source>
        <strain>Marseille</strain>
    </source>
</reference>
<protein>
    <recommendedName>
        <fullName evidence="1">Biosynthetic peptidoglycan transglycosylase</fullName>
        <ecNumber evidence="1">2.4.99.28</ecNumber>
    </recommendedName>
    <alternativeName>
        <fullName evidence="1">Glycan polymerase</fullName>
    </alternativeName>
    <alternativeName>
        <fullName evidence="1">Peptidoglycan glycosyltransferase MtgA</fullName>
        <shortName evidence="1">PGT</shortName>
    </alternativeName>
</protein>
<dbReference type="EC" id="2.4.99.28" evidence="1"/>
<dbReference type="EMBL" id="CP000269">
    <property type="protein sequence ID" value="ABR90642.1"/>
    <property type="molecule type" value="Genomic_DNA"/>
</dbReference>
<dbReference type="RefSeq" id="WP_012080810.1">
    <property type="nucleotide sequence ID" value="NC_009659.1"/>
</dbReference>
<dbReference type="SMR" id="A6T2A4"/>
<dbReference type="STRING" id="375286.mma_2961"/>
<dbReference type="CAZy" id="GT51">
    <property type="family name" value="Glycosyltransferase Family 51"/>
</dbReference>
<dbReference type="KEGG" id="mms:mma_2961"/>
<dbReference type="eggNOG" id="COG0744">
    <property type="taxonomic scope" value="Bacteria"/>
</dbReference>
<dbReference type="HOGENOM" id="CLU_006354_1_0_4"/>
<dbReference type="OrthoDB" id="9766909at2"/>
<dbReference type="UniPathway" id="UPA00219"/>
<dbReference type="Proteomes" id="UP000006388">
    <property type="component" value="Chromosome"/>
</dbReference>
<dbReference type="GO" id="GO:0009274">
    <property type="term" value="C:peptidoglycan-based cell wall"/>
    <property type="evidence" value="ECO:0007669"/>
    <property type="project" value="InterPro"/>
</dbReference>
<dbReference type="GO" id="GO:0005886">
    <property type="term" value="C:plasma membrane"/>
    <property type="evidence" value="ECO:0007669"/>
    <property type="project" value="UniProtKB-SubCell"/>
</dbReference>
<dbReference type="GO" id="GO:0016763">
    <property type="term" value="F:pentosyltransferase activity"/>
    <property type="evidence" value="ECO:0007669"/>
    <property type="project" value="InterPro"/>
</dbReference>
<dbReference type="GO" id="GO:0008955">
    <property type="term" value="F:peptidoglycan glycosyltransferase activity"/>
    <property type="evidence" value="ECO:0007669"/>
    <property type="project" value="UniProtKB-UniRule"/>
</dbReference>
<dbReference type="GO" id="GO:0071555">
    <property type="term" value="P:cell wall organization"/>
    <property type="evidence" value="ECO:0007669"/>
    <property type="project" value="UniProtKB-KW"/>
</dbReference>
<dbReference type="GO" id="GO:0009252">
    <property type="term" value="P:peptidoglycan biosynthetic process"/>
    <property type="evidence" value="ECO:0007669"/>
    <property type="project" value="UniProtKB-UniRule"/>
</dbReference>
<dbReference type="GO" id="GO:0008360">
    <property type="term" value="P:regulation of cell shape"/>
    <property type="evidence" value="ECO:0007669"/>
    <property type="project" value="UniProtKB-KW"/>
</dbReference>
<dbReference type="Gene3D" id="1.10.3810.10">
    <property type="entry name" value="Biosynthetic peptidoglycan transglycosylase-like"/>
    <property type="match status" value="1"/>
</dbReference>
<dbReference type="HAMAP" id="MF_00766">
    <property type="entry name" value="PGT_MtgA"/>
    <property type="match status" value="1"/>
</dbReference>
<dbReference type="InterPro" id="IPR001264">
    <property type="entry name" value="Glyco_trans_51"/>
</dbReference>
<dbReference type="InterPro" id="IPR023346">
    <property type="entry name" value="Lysozyme-like_dom_sf"/>
</dbReference>
<dbReference type="InterPro" id="IPR036950">
    <property type="entry name" value="PBP_transglycosylase"/>
</dbReference>
<dbReference type="InterPro" id="IPR011812">
    <property type="entry name" value="Pep_trsgly"/>
</dbReference>
<dbReference type="NCBIfam" id="TIGR02070">
    <property type="entry name" value="mono_pep_trsgly"/>
    <property type="match status" value="1"/>
</dbReference>
<dbReference type="PANTHER" id="PTHR30400:SF0">
    <property type="entry name" value="BIOSYNTHETIC PEPTIDOGLYCAN TRANSGLYCOSYLASE"/>
    <property type="match status" value="1"/>
</dbReference>
<dbReference type="PANTHER" id="PTHR30400">
    <property type="entry name" value="MONOFUNCTIONAL BIOSYNTHETIC PEPTIDOGLYCAN TRANSGLYCOSYLASE"/>
    <property type="match status" value="1"/>
</dbReference>
<dbReference type="Pfam" id="PF00912">
    <property type="entry name" value="Transgly"/>
    <property type="match status" value="1"/>
</dbReference>
<dbReference type="SUPFAM" id="SSF53955">
    <property type="entry name" value="Lysozyme-like"/>
    <property type="match status" value="1"/>
</dbReference>
<proteinExistence type="inferred from homology"/>
<accession>A6T2A4</accession>
<keyword id="KW-0997">Cell inner membrane</keyword>
<keyword id="KW-1003">Cell membrane</keyword>
<keyword id="KW-0133">Cell shape</keyword>
<keyword id="KW-0961">Cell wall biogenesis/degradation</keyword>
<keyword id="KW-0328">Glycosyltransferase</keyword>
<keyword id="KW-0472">Membrane</keyword>
<keyword id="KW-0573">Peptidoglycan synthesis</keyword>
<keyword id="KW-0808">Transferase</keyword>
<keyword id="KW-0812">Transmembrane</keyword>
<keyword id="KW-1133">Transmembrane helix</keyword>
<comment type="function">
    <text evidence="1">Peptidoglycan polymerase that catalyzes glycan chain elongation from lipid-linked precursors.</text>
</comment>
<comment type="catalytic activity">
    <reaction evidence="1">
        <text>[GlcNAc-(1-&gt;4)-Mur2Ac(oyl-L-Ala-gamma-D-Glu-L-Lys-D-Ala-D-Ala)](n)-di-trans,octa-cis-undecaprenyl diphosphate + beta-D-GlcNAc-(1-&gt;4)-Mur2Ac(oyl-L-Ala-gamma-D-Glu-L-Lys-D-Ala-D-Ala)-di-trans,octa-cis-undecaprenyl diphosphate = [GlcNAc-(1-&gt;4)-Mur2Ac(oyl-L-Ala-gamma-D-Glu-L-Lys-D-Ala-D-Ala)](n+1)-di-trans,octa-cis-undecaprenyl diphosphate + di-trans,octa-cis-undecaprenyl diphosphate + H(+)</text>
        <dbReference type="Rhea" id="RHEA:23708"/>
        <dbReference type="Rhea" id="RHEA-COMP:9602"/>
        <dbReference type="Rhea" id="RHEA-COMP:9603"/>
        <dbReference type="ChEBI" id="CHEBI:15378"/>
        <dbReference type="ChEBI" id="CHEBI:58405"/>
        <dbReference type="ChEBI" id="CHEBI:60033"/>
        <dbReference type="ChEBI" id="CHEBI:78435"/>
        <dbReference type="EC" id="2.4.99.28"/>
    </reaction>
</comment>
<comment type="pathway">
    <text evidence="1">Cell wall biogenesis; peptidoglycan biosynthesis.</text>
</comment>
<comment type="subcellular location">
    <subcellularLocation>
        <location evidence="1">Cell inner membrane</location>
        <topology evidence="1">Single-pass membrane protein</topology>
    </subcellularLocation>
</comment>
<comment type="similarity">
    <text evidence="1">Belongs to the glycosyltransferase 51 family.</text>
</comment>
<feature type="chain" id="PRO_1000017308" description="Biosynthetic peptidoglycan transglycosylase">
    <location>
        <begin position="1"/>
        <end position="231"/>
    </location>
</feature>
<feature type="transmembrane region" description="Helical" evidence="1">
    <location>
        <begin position="7"/>
        <end position="27"/>
    </location>
</feature>
<sequence>MKILRKLLFWLIVVPVLLVLLLQLYFFLQIGWWVNHNPGSTSFMRHQLSILQEKNPKAQLKHKWIPYNRISNNLKRAIIASEDSNFSEHEGVDWDALQKAYEKNIKKGKVVAGGSTITQQLAKNLFLSGDRSYLRKGQEVIITYMLEYWMDKERIFEIYLNVVEWGVGIFGAEAAAQHYYGVSAAQLGAPQAARLAVMLPNPRFYDGHRGTAYLARRTDLILRRMNSAALP</sequence>
<name>MTGA_JANMA</name>
<gene>
    <name evidence="1" type="primary">mtgA</name>
    <name type="ordered locus">mma_2961</name>
</gene>
<evidence type="ECO:0000255" key="1">
    <source>
        <dbReference type="HAMAP-Rule" id="MF_00766"/>
    </source>
</evidence>